<keyword id="KW-0021">Allosteric enzyme</keyword>
<keyword id="KW-0028">Amino-acid biosynthesis</keyword>
<keyword id="KW-0067">ATP-binding</keyword>
<keyword id="KW-0198">Cysteine biosynthesis</keyword>
<keyword id="KW-0963">Cytoplasm</keyword>
<keyword id="KW-0486">Methionine biosynthesis</keyword>
<keyword id="KW-0547">Nucleotide-binding</keyword>
<keyword id="KW-0548">Nucleotidyltransferase</keyword>
<keyword id="KW-0808">Transferase</keyword>
<proteinExistence type="inferred from homology"/>
<dbReference type="EC" id="2.7.7.4" evidence="1"/>
<dbReference type="EMBL" id="AAEY01000042">
    <property type="protein sequence ID" value="EAL19241.1"/>
    <property type="molecule type" value="Genomic_DNA"/>
</dbReference>
<dbReference type="RefSeq" id="XP_773888.1">
    <property type="nucleotide sequence ID" value="XM_768795.1"/>
</dbReference>
<dbReference type="SMR" id="P0CN05"/>
<dbReference type="EnsemblFungi" id="AAW45300">
    <property type="protein sequence ID" value="AAW45300"/>
    <property type="gene ID" value="CNI03560"/>
</dbReference>
<dbReference type="GeneID" id="4937866"/>
<dbReference type="KEGG" id="cnb:CNBH3400"/>
<dbReference type="VEuPathDB" id="FungiDB:CNBH3400"/>
<dbReference type="HOGENOM" id="CLU_022950_0_0_1"/>
<dbReference type="OrthoDB" id="2084at5206"/>
<dbReference type="UniPathway" id="UPA00140">
    <property type="reaction ID" value="UER00204"/>
</dbReference>
<dbReference type="GO" id="GO:0005737">
    <property type="term" value="C:cytoplasm"/>
    <property type="evidence" value="ECO:0007669"/>
    <property type="project" value="UniProtKB-SubCell"/>
</dbReference>
<dbReference type="GO" id="GO:0004020">
    <property type="term" value="F:adenylylsulfate kinase activity"/>
    <property type="evidence" value="ECO:0007669"/>
    <property type="project" value="InterPro"/>
</dbReference>
<dbReference type="GO" id="GO:0005524">
    <property type="term" value="F:ATP binding"/>
    <property type="evidence" value="ECO:0007669"/>
    <property type="project" value="UniProtKB-KW"/>
</dbReference>
<dbReference type="GO" id="GO:0004781">
    <property type="term" value="F:sulfate adenylyltransferase (ATP) activity"/>
    <property type="evidence" value="ECO:0007669"/>
    <property type="project" value="UniProtKB-UniRule"/>
</dbReference>
<dbReference type="GO" id="GO:0019344">
    <property type="term" value="P:cysteine biosynthetic process"/>
    <property type="evidence" value="ECO:0007669"/>
    <property type="project" value="UniProtKB-KW"/>
</dbReference>
<dbReference type="GO" id="GO:0070814">
    <property type="term" value="P:hydrogen sulfide biosynthetic process"/>
    <property type="evidence" value="ECO:0007669"/>
    <property type="project" value="UniProtKB-UniRule"/>
</dbReference>
<dbReference type="GO" id="GO:0009086">
    <property type="term" value="P:methionine biosynthetic process"/>
    <property type="evidence" value="ECO:0007669"/>
    <property type="project" value="UniProtKB-KW"/>
</dbReference>
<dbReference type="GO" id="GO:0010134">
    <property type="term" value="P:sulfate assimilation via adenylyl sulfate reduction"/>
    <property type="evidence" value="ECO:0007669"/>
    <property type="project" value="TreeGrafter"/>
</dbReference>
<dbReference type="GO" id="GO:0019379">
    <property type="term" value="P:sulfate assimilation, phosphoadenylyl sulfate reduction by phosphoadenylyl-sulfate reductase (thioredoxin)"/>
    <property type="evidence" value="ECO:0007669"/>
    <property type="project" value="TreeGrafter"/>
</dbReference>
<dbReference type="CDD" id="cd02027">
    <property type="entry name" value="APSK"/>
    <property type="match status" value="1"/>
</dbReference>
<dbReference type="CDD" id="cd00517">
    <property type="entry name" value="ATPS"/>
    <property type="match status" value="1"/>
</dbReference>
<dbReference type="FunFam" id="3.10.400.10:FF:000003">
    <property type="entry name" value="Sulfate adenylyltransferase"/>
    <property type="match status" value="1"/>
</dbReference>
<dbReference type="FunFam" id="3.40.50.300:FF:000802">
    <property type="entry name" value="Sulfate adenylyltransferase"/>
    <property type="match status" value="1"/>
</dbReference>
<dbReference type="FunFam" id="3.40.50.620:FF:000052">
    <property type="entry name" value="Sulfate adenylyltransferase"/>
    <property type="match status" value="1"/>
</dbReference>
<dbReference type="Gene3D" id="3.40.50.620">
    <property type="entry name" value="HUPs"/>
    <property type="match status" value="1"/>
</dbReference>
<dbReference type="Gene3D" id="3.40.50.300">
    <property type="entry name" value="P-loop containing nucleotide triphosphate hydrolases"/>
    <property type="match status" value="1"/>
</dbReference>
<dbReference type="Gene3D" id="3.10.400.10">
    <property type="entry name" value="Sulfate adenylyltransferase"/>
    <property type="match status" value="1"/>
</dbReference>
<dbReference type="HAMAP" id="MF_03106">
    <property type="entry name" value="Sulf_adenylyltr_euk"/>
    <property type="match status" value="1"/>
</dbReference>
<dbReference type="InterPro" id="IPR002891">
    <property type="entry name" value="APS_kinase"/>
</dbReference>
<dbReference type="InterPro" id="IPR025980">
    <property type="entry name" value="ATP-Sase_PUA-like_dom"/>
</dbReference>
<dbReference type="InterPro" id="IPR027417">
    <property type="entry name" value="P-loop_NTPase"/>
</dbReference>
<dbReference type="InterPro" id="IPR015947">
    <property type="entry name" value="PUA-like_sf"/>
</dbReference>
<dbReference type="InterPro" id="IPR014729">
    <property type="entry name" value="Rossmann-like_a/b/a_fold"/>
</dbReference>
<dbReference type="InterPro" id="IPR027535">
    <property type="entry name" value="Sulf_adenylyltr_euk"/>
</dbReference>
<dbReference type="InterPro" id="IPR050512">
    <property type="entry name" value="Sulf_AdTrans/APS_kinase"/>
</dbReference>
<dbReference type="InterPro" id="IPR024951">
    <property type="entry name" value="Sulfurylase_cat_dom"/>
</dbReference>
<dbReference type="InterPro" id="IPR002650">
    <property type="entry name" value="Sulphate_adenylyltransferase"/>
</dbReference>
<dbReference type="NCBIfam" id="NF004040">
    <property type="entry name" value="PRK05537.1"/>
    <property type="match status" value="1"/>
</dbReference>
<dbReference type="NCBIfam" id="TIGR00339">
    <property type="entry name" value="sopT"/>
    <property type="match status" value="1"/>
</dbReference>
<dbReference type="PANTHER" id="PTHR42700">
    <property type="entry name" value="SULFATE ADENYLYLTRANSFERASE"/>
    <property type="match status" value="1"/>
</dbReference>
<dbReference type="PANTHER" id="PTHR42700:SF1">
    <property type="entry name" value="SULFATE ADENYLYLTRANSFERASE"/>
    <property type="match status" value="1"/>
</dbReference>
<dbReference type="Pfam" id="PF01583">
    <property type="entry name" value="APS_kinase"/>
    <property type="match status" value="1"/>
</dbReference>
<dbReference type="Pfam" id="PF01747">
    <property type="entry name" value="ATP-sulfurylase"/>
    <property type="match status" value="1"/>
</dbReference>
<dbReference type="Pfam" id="PF14306">
    <property type="entry name" value="PUA_2"/>
    <property type="match status" value="1"/>
</dbReference>
<dbReference type="SUPFAM" id="SSF52374">
    <property type="entry name" value="Nucleotidylyl transferase"/>
    <property type="match status" value="1"/>
</dbReference>
<dbReference type="SUPFAM" id="SSF52540">
    <property type="entry name" value="P-loop containing nucleoside triphosphate hydrolases"/>
    <property type="match status" value="1"/>
</dbReference>
<dbReference type="SUPFAM" id="SSF88697">
    <property type="entry name" value="PUA domain-like"/>
    <property type="match status" value="1"/>
</dbReference>
<protein>
    <recommendedName>
        <fullName evidence="1">Sulfate adenylyltransferase</fullName>
        <ecNumber evidence="1">2.7.7.4</ecNumber>
    </recommendedName>
    <alternativeName>
        <fullName evidence="1">ATP-sulfurylase</fullName>
    </alternativeName>
    <alternativeName>
        <fullName evidence="1">Sulfate adenylate transferase</fullName>
        <shortName evidence="1">SAT</shortName>
    </alternativeName>
</protein>
<organism>
    <name type="scientific">Cryptococcus neoformans var. neoformans serotype D (strain B-3501A)</name>
    <name type="common">Filobasidiella neoformans</name>
    <dbReference type="NCBI Taxonomy" id="283643"/>
    <lineage>
        <taxon>Eukaryota</taxon>
        <taxon>Fungi</taxon>
        <taxon>Dikarya</taxon>
        <taxon>Basidiomycota</taxon>
        <taxon>Agaricomycotina</taxon>
        <taxon>Tremellomycetes</taxon>
        <taxon>Tremellales</taxon>
        <taxon>Cryptococcaceae</taxon>
        <taxon>Cryptococcus</taxon>
        <taxon>Cryptococcus neoformans species complex</taxon>
    </lineage>
</organism>
<gene>
    <name evidence="1" type="primary">MET3</name>
    <name type="ordered locus">CNBH3400</name>
</gene>
<accession>P0CN05</accession>
<accession>Q55MU4</accession>
<accession>Q5KB71</accession>
<feature type="chain" id="PRO_0000410056" description="Sulfate adenylyltransferase">
    <location>
        <begin position="1"/>
        <end position="581"/>
    </location>
</feature>
<feature type="region of interest" description="N-terminal" evidence="1">
    <location>
        <begin position="1"/>
        <end position="176"/>
    </location>
</feature>
<feature type="region of interest" description="Catalytic" evidence="1">
    <location>
        <begin position="177"/>
        <end position="401"/>
    </location>
</feature>
<feature type="region of interest" description="Allosteric regulation domain; adenylyl-sulfate kinase-like" evidence="1">
    <location>
        <begin position="402"/>
        <end position="581"/>
    </location>
</feature>
<feature type="active site" evidence="1">
    <location>
        <position position="205"/>
    </location>
</feature>
<feature type="active site" evidence="1">
    <location>
        <position position="206"/>
    </location>
</feature>
<feature type="active site" evidence="1">
    <location>
        <position position="207"/>
    </location>
</feature>
<feature type="binding site" evidence="1">
    <location>
        <begin position="204"/>
        <end position="207"/>
    </location>
    <ligand>
        <name>ATP</name>
        <dbReference type="ChEBI" id="CHEBI:30616"/>
    </ligand>
</feature>
<feature type="binding site" evidence="1">
    <location>
        <position position="204"/>
    </location>
    <ligand>
        <name>sulfate</name>
        <dbReference type="ChEBI" id="CHEBI:16189"/>
    </ligand>
</feature>
<feature type="binding site" evidence="1">
    <location>
        <position position="206"/>
    </location>
    <ligand>
        <name>sulfate</name>
        <dbReference type="ChEBI" id="CHEBI:16189"/>
    </ligand>
</feature>
<feature type="binding site" evidence="1">
    <location>
        <begin position="298"/>
        <end position="301"/>
    </location>
    <ligand>
        <name>ATP</name>
        <dbReference type="ChEBI" id="CHEBI:30616"/>
    </ligand>
</feature>
<feature type="binding site" evidence="1">
    <location>
        <position position="302"/>
    </location>
    <ligand>
        <name>sulfate</name>
        <dbReference type="ChEBI" id="CHEBI:16189"/>
    </ligand>
</feature>
<feature type="binding site" evidence="1">
    <location>
        <position position="340"/>
    </location>
    <ligand>
        <name>ATP</name>
        <dbReference type="ChEBI" id="CHEBI:30616"/>
    </ligand>
</feature>
<feature type="binding site" evidence="1">
    <location>
        <begin position="441"/>
        <end position="444"/>
    </location>
    <ligand>
        <name>3'-phosphoadenylyl sulfate</name>
        <dbReference type="ChEBI" id="CHEBI:58339"/>
        <note>allosteric inhibitor</note>
    </ligand>
</feature>
<feature type="binding site" evidence="1">
    <location>
        <begin position="486"/>
        <end position="487"/>
    </location>
    <ligand>
        <name>3'-phosphoadenylyl sulfate</name>
        <dbReference type="ChEBI" id="CHEBI:58339"/>
        <note>allosteric inhibitor</note>
    </ligand>
</feature>
<feature type="binding site" evidence="1">
    <location>
        <position position="526"/>
    </location>
    <ligand>
        <name>3'-phosphoadenylyl sulfate</name>
        <dbReference type="ChEBI" id="CHEBI:58339"/>
        <note>allosteric inhibitor</note>
    </ligand>
</feature>
<feature type="site" description="Transition state stabilizer" evidence="1">
    <location>
        <position position="210"/>
    </location>
</feature>
<feature type="site" description="Transition state stabilizer" evidence="1">
    <location>
        <position position="213"/>
    </location>
</feature>
<feature type="site" description="Induces change in substrate recognition on ATP binding" evidence="1">
    <location>
        <position position="337"/>
    </location>
</feature>
<comment type="function">
    <text evidence="1">Catalyzes the first intracellular reaction of sulfate assimilation, forming adenosine-5'-phosphosulfate (APS) from inorganic sulfate and ATP. Plays an important role in sulfate activation as a component of the biosynthesis pathway of sulfur-containing amino acids.</text>
</comment>
<comment type="catalytic activity">
    <reaction evidence="1">
        <text>sulfate + ATP + H(+) = adenosine 5'-phosphosulfate + diphosphate</text>
        <dbReference type="Rhea" id="RHEA:18133"/>
        <dbReference type="ChEBI" id="CHEBI:15378"/>
        <dbReference type="ChEBI" id="CHEBI:16189"/>
        <dbReference type="ChEBI" id="CHEBI:30616"/>
        <dbReference type="ChEBI" id="CHEBI:33019"/>
        <dbReference type="ChEBI" id="CHEBI:58243"/>
        <dbReference type="EC" id="2.7.7.4"/>
    </reaction>
</comment>
<comment type="activity regulation">
    <text evidence="1">Allosterically inhibited by 3'-phosphoadenosine 5'-phosphosulfate (PAPS).</text>
</comment>
<comment type="pathway">
    <text evidence="1">Sulfur metabolism; hydrogen sulfide biosynthesis; sulfite from sulfate: step 1/3.</text>
</comment>
<comment type="subunit">
    <text evidence="1">Homohexamer. Dimer of trimers.</text>
</comment>
<comment type="subcellular location">
    <subcellularLocation>
        <location evidence="1">Cytoplasm</location>
    </subcellularLocation>
</comment>
<comment type="domain">
    <text evidence="1">The adenylyl-sulfate kinase (APS kinase) is non-functional. It is involved in allosteric regulation by PAPS. PAPS binding induces a large rotational rearrangement of domains lowering the substrate affinity of the enzyme.</text>
</comment>
<comment type="similarity">
    <text evidence="1">In the N-terminal section; belongs to the sulfate adenylyltransferase family.</text>
</comment>
<comment type="similarity">
    <text evidence="1">In the C-terminal section; belongs to the APS kinase family.</text>
</comment>
<evidence type="ECO:0000255" key="1">
    <source>
        <dbReference type="HAMAP-Rule" id="MF_03106"/>
    </source>
</evidence>
<sequence>MANAPHGGVLKDLLVRDAALHDSLLQEARSLNDIFLTERQLCDLELILNGGFSPLEGFMNERDYTSVVETLRLAPYNGQKHGDVFPIPITLDVSQEDINTLGLKQGGRVALRDPRDDAALAILTVSDIYRPNKAIEAEKVMGADDIAHPSVAYLRNNVKEFYVGGKVQAIQAPTHFDYVPLRFTPAELRAHFHKLAWRKVVAFQTRNPMHRAHRELTVRAARQRRANVLIHPVVGLTKPGDVDHYTRVRAYQALMPSYPEGMAHLALLPLAMRMAGPREAVWHAVIRKNFGATHFIVGRDHAGPGKNSQGQDFYGPYDAQELVTQFKDELQIEMVPFQAMTYLPGSDEYQPVDEVPKGTPTADISGTELRKRLRTGASIPDWFSYTGVVKVLRESYPPRPQQGFTILLTGLHNSGKDTIARALQVTLQQQGSRSVSLLLGEELRSDLDPQIGRAITPEQKHINLERIGFVAGELTKAGAAVIAAPTAPYERSRQAFKKQVVGSGGGNYFLVHVATPLEWCEKVDRRGLYKAARAGEIKNLTGVDDVYEAPEDADLVCDLRNDTVPEIVHSIIMILESQNLV</sequence>
<reference key="1">
    <citation type="journal article" date="2005" name="Science">
        <title>The genome of the basidiomycetous yeast and human pathogen Cryptococcus neoformans.</title>
        <authorList>
            <person name="Loftus B.J."/>
            <person name="Fung E."/>
            <person name="Roncaglia P."/>
            <person name="Rowley D."/>
            <person name="Amedeo P."/>
            <person name="Bruno D."/>
            <person name="Vamathevan J."/>
            <person name="Miranda M."/>
            <person name="Anderson I.J."/>
            <person name="Fraser J.A."/>
            <person name="Allen J.E."/>
            <person name="Bosdet I.E."/>
            <person name="Brent M.R."/>
            <person name="Chiu R."/>
            <person name="Doering T.L."/>
            <person name="Donlin M.J."/>
            <person name="D'Souza C.A."/>
            <person name="Fox D.S."/>
            <person name="Grinberg V."/>
            <person name="Fu J."/>
            <person name="Fukushima M."/>
            <person name="Haas B.J."/>
            <person name="Huang J.C."/>
            <person name="Janbon G."/>
            <person name="Jones S.J.M."/>
            <person name="Koo H.L."/>
            <person name="Krzywinski M.I."/>
            <person name="Kwon-Chung K.J."/>
            <person name="Lengeler K.B."/>
            <person name="Maiti R."/>
            <person name="Marra M.A."/>
            <person name="Marra R.E."/>
            <person name="Mathewson C.A."/>
            <person name="Mitchell T.G."/>
            <person name="Pertea M."/>
            <person name="Riggs F.R."/>
            <person name="Salzberg S.L."/>
            <person name="Schein J.E."/>
            <person name="Shvartsbeyn A."/>
            <person name="Shin H."/>
            <person name="Shumway M."/>
            <person name="Specht C.A."/>
            <person name="Suh B.B."/>
            <person name="Tenney A."/>
            <person name="Utterback T.R."/>
            <person name="Wickes B.L."/>
            <person name="Wortman J.R."/>
            <person name="Wye N.H."/>
            <person name="Kronstad J.W."/>
            <person name="Lodge J.K."/>
            <person name="Heitman J."/>
            <person name="Davis R.W."/>
            <person name="Fraser C.M."/>
            <person name="Hyman R.W."/>
        </authorList>
    </citation>
    <scope>NUCLEOTIDE SEQUENCE [LARGE SCALE GENOMIC DNA]</scope>
    <source>
        <strain>B-3501A</strain>
    </source>
</reference>
<name>MET3_CRYNB</name>